<evidence type="ECO:0000250" key="1">
    <source>
        <dbReference type="UniProtKB" id="Q99755"/>
    </source>
</evidence>
<evidence type="ECO:0000255" key="2"/>
<evidence type="ECO:0000255" key="3">
    <source>
        <dbReference type="PROSITE-ProRule" id="PRU00781"/>
    </source>
</evidence>
<evidence type="ECO:0000269" key="4">
    <source>
    </source>
</evidence>
<evidence type="ECO:0000303" key="5">
    <source>
    </source>
</evidence>
<evidence type="ECO:0000305" key="6"/>
<evidence type="ECO:0000312" key="7">
    <source>
        <dbReference type="Araport" id="AT2G26420"/>
    </source>
</evidence>
<evidence type="ECO:0000312" key="8">
    <source>
        <dbReference type="EMBL" id="AAC14492.1"/>
    </source>
</evidence>
<dbReference type="EC" id="2.7.1.68" evidence="1"/>
<dbReference type="EMBL" id="AC002505">
    <property type="protein sequence ID" value="AAC14492.1"/>
    <property type="molecule type" value="Genomic_DNA"/>
</dbReference>
<dbReference type="EMBL" id="CP002685">
    <property type="protein sequence ID" value="AEC07835.1"/>
    <property type="molecule type" value="Genomic_DNA"/>
</dbReference>
<dbReference type="PIR" id="T00975">
    <property type="entry name" value="T00975"/>
</dbReference>
<dbReference type="RefSeq" id="NP_001318292.1">
    <property type="nucleotide sequence ID" value="NM_001336067.1"/>
</dbReference>
<dbReference type="SMR" id="O48709"/>
<dbReference type="BioGRID" id="2534">
    <property type="interactions" value="1"/>
</dbReference>
<dbReference type="FunCoup" id="O48709">
    <property type="interactions" value="2498"/>
</dbReference>
<dbReference type="STRING" id="3702.O48709"/>
<dbReference type="iPTMnet" id="O48709"/>
<dbReference type="PaxDb" id="3702-AT2G26420.1"/>
<dbReference type="EnsemblPlants" id="AT2G26420.1">
    <property type="protein sequence ID" value="AT2G26420.1"/>
    <property type="gene ID" value="AT2G26420"/>
</dbReference>
<dbReference type="GeneID" id="817182"/>
<dbReference type="Gramene" id="AT2G26420.1">
    <property type="protein sequence ID" value="AT2G26420.1"/>
    <property type="gene ID" value="AT2G26420"/>
</dbReference>
<dbReference type="KEGG" id="ath:AT2G26420"/>
<dbReference type="Araport" id="AT2G26420"/>
<dbReference type="TAIR" id="AT2G26420">
    <property type="gene designation" value="PIP5K3"/>
</dbReference>
<dbReference type="eggNOG" id="KOG0229">
    <property type="taxonomic scope" value="Eukaryota"/>
</dbReference>
<dbReference type="HOGENOM" id="CLU_004312_6_4_1"/>
<dbReference type="InParanoid" id="O48709"/>
<dbReference type="OMA" id="TWANRNR"/>
<dbReference type="PhylomeDB" id="O48709"/>
<dbReference type="BioCyc" id="ARA:AT2G26420-MONOMER"/>
<dbReference type="BRENDA" id="2.7.1.68">
    <property type="organism ID" value="399"/>
</dbReference>
<dbReference type="PRO" id="PR:O48709"/>
<dbReference type="Proteomes" id="UP000006548">
    <property type="component" value="Chromosome 2"/>
</dbReference>
<dbReference type="ExpressionAtlas" id="O48709">
    <property type="expression patterns" value="baseline and differential"/>
</dbReference>
<dbReference type="GO" id="GO:0016324">
    <property type="term" value="C:apical plasma membrane"/>
    <property type="evidence" value="ECO:0000314"/>
    <property type="project" value="TAIR"/>
</dbReference>
<dbReference type="GO" id="GO:0005737">
    <property type="term" value="C:cytoplasm"/>
    <property type="evidence" value="ECO:0000314"/>
    <property type="project" value="TAIR"/>
</dbReference>
<dbReference type="GO" id="GO:0005886">
    <property type="term" value="C:plasma membrane"/>
    <property type="evidence" value="ECO:0000314"/>
    <property type="project" value="UniProtKB"/>
</dbReference>
<dbReference type="GO" id="GO:0016308">
    <property type="term" value="F:1-phosphatidylinositol-4-phosphate 5-kinase activity"/>
    <property type="evidence" value="ECO:0000314"/>
    <property type="project" value="TAIR"/>
</dbReference>
<dbReference type="GO" id="GO:0005524">
    <property type="term" value="F:ATP binding"/>
    <property type="evidence" value="ECO:0007669"/>
    <property type="project" value="UniProtKB-KW"/>
</dbReference>
<dbReference type="GO" id="GO:0046488">
    <property type="term" value="P:phosphatidylinositol metabolic process"/>
    <property type="evidence" value="ECO:0007669"/>
    <property type="project" value="InterPro"/>
</dbReference>
<dbReference type="GO" id="GO:2000114">
    <property type="term" value="P:regulation of establishment of cell polarity"/>
    <property type="evidence" value="ECO:0000315"/>
    <property type="project" value="TAIR"/>
</dbReference>
<dbReference type="GO" id="GO:0048768">
    <property type="term" value="P:root hair cell tip growth"/>
    <property type="evidence" value="ECO:0000315"/>
    <property type="project" value="TAIR"/>
</dbReference>
<dbReference type="GO" id="GO:0048767">
    <property type="term" value="P:root hair elongation"/>
    <property type="evidence" value="ECO:0000315"/>
    <property type="project" value="TAIR"/>
</dbReference>
<dbReference type="GO" id="GO:0048766">
    <property type="term" value="P:root hair initiation"/>
    <property type="evidence" value="ECO:0000315"/>
    <property type="project" value="TAIR"/>
</dbReference>
<dbReference type="CDD" id="cd17302">
    <property type="entry name" value="PIPKc_AtPIP5K_like"/>
    <property type="match status" value="1"/>
</dbReference>
<dbReference type="FunFam" id="2.20.110.10:FF:000015">
    <property type="entry name" value="Phosphatidylinositol 4-phosphate 5-kinase"/>
    <property type="match status" value="1"/>
</dbReference>
<dbReference type="FunFam" id="3.30.800.10:FF:000003">
    <property type="entry name" value="Phosphatidylinositol 4-phosphate 5-kinase"/>
    <property type="match status" value="1"/>
</dbReference>
<dbReference type="Gene3D" id="3.30.810.10">
    <property type="entry name" value="2-Layer Sandwich"/>
    <property type="match status" value="1"/>
</dbReference>
<dbReference type="Gene3D" id="2.20.110.10">
    <property type="entry name" value="Histone H3 K4-specific methyltransferase SET7/9 N-terminal domain"/>
    <property type="match status" value="4"/>
</dbReference>
<dbReference type="Gene3D" id="3.30.800.10">
    <property type="entry name" value="Phosphatidylinositol Phosphate Kinase II Beta"/>
    <property type="match status" value="1"/>
</dbReference>
<dbReference type="InterPro" id="IPR003409">
    <property type="entry name" value="MORN"/>
</dbReference>
<dbReference type="InterPro" id="IPR017163">
    <property type="entry name" value="PIno-4-P-5_kinase_pln"/>
</dbReference>
<dbReference type="InterPro" id="IPR027483">
    <property type="entry name" value="PInositol-4-P-4/5-kinase_C_sf"/>
</dbReference>
<dbReference type="InterPro" id="IPR002498">
    <property type="entry name" value="PInositol-4-P-4/5-kinase_core"/>
</dbReference>
<dbReference type="InterPro" id="IPR027484">
    <property type="entry name" value="PInositol-4-P-5-kinase_N"/>
</dbReference>
<dbReference type="InterPro" id="IPR023610">
    <property type="entry name" value="PInositol-4/5-P-5/4-kinase"/>
</dbReference>
<dbReference type="PANTHER" id="PTHR23086:SF114">
    <property type="entry name" value="PHOSPHATIDYLINOSITOL 4-PHOSPHATE 5-KINASE 3"/>
    <property type="match status" value="1"/>
</dbReference>
<dbReference type="PANTHER" id="PTHR23086">
    <property type="entry name" value="PHOSPHATIDYLINOSITOL-4-PHOSPHATE 5-KINASE"/>
    <property type="match status" value="1"/>
</dbReference>
<dbReference type="Pfam" id="PF02493">
    <property type="entry name" value="MORN"/>
    <property type="match status" value="7"/>
</dbReference>
<dbReference type="Pfam" id="PF01504">
    <property type="entry name" value="PIP5K"/>
    <property type="match status" value="1"/>
</dbReference>
<dbReference type="PIRSF" id="PIRSF037274">
    <property type="entry name" value="PIP5K_plant_prd"/>
    <property type="match status" value="1"/>
</dbReference>
<dbReference type="SMART" id="SM00698">
    <property type="entry name" value="MORN"/>
    <property type="match status" value="7"/>
</dbReference>
<dbReference type="SMART" id="SM00330">
    <property type="entry name" value="PIPKc"/>
    <property type="match status" value="1"/>
</dbReference>
<dbReference type="SUPFAM" id="SSF82185">
    <property type="entry name" value="Histone H3 K4-specific methyltransferase SET7/9 N-terminal domain"/>
    <property type="match status" value="2"/>
</dbReference>
<dbReference type="SUPFAM" id="SSF56104">
    <property type="entry name" value="SAICAR synthase-like"/>
    <property type="match status" value="1"/>
</dbReference>
<dbReference type="PROSITE" id="PS51455">
    <property type="entry name" value="PIPK"/>
    <property type="match status" value="1"/>
</dbReference>
<comment type="function">
    <text evidence="4">With DRP1A and DRP2B, required for the precise coordination of polar ARAC3/ROP6 and ARAC4/ROP2 placement and subsequent root hair positioning during planar polarity formation in root hair-forming cells, probably by mediating the correct basal-to-planar polarity switching of D6PK into the polar, lipid-enriched domain.</text>
</comment>
<comment type="catalytic activity">
    <reaction evidence="1">
        <text>a 1,2-diacyl-sn-glycero-3-phospho-(1D-myo-inositol 4-phosphate) + ATP = a 1,2-diacyl-sn-glycero-3-phospho-(1D-myo-inositol-4,5-bisphosphate) + ADP + H(+)</text>
        <dbReference type="Rhea" id="RHEA:14425"/>
        <dbReference type="ChEBI" id="CHEBI:15378"/>
        <dbReference type="ChEBI" id="CHEBI:30616"/>
        <dbReference type="ChEBI" id="CHEBI:58178"/>
        <dbReference type="ChEBI" id="CHEBI:58456"/>
        <dbReference type="ChEBI" id="CHEBI:456216"/>
        <dbReference type="EC" id="2.7.1.68"/>
    </reaction>
</comment>
<comment type="subcellular location">
    <subcellularLocation>
        <location evidence="4">Cell membrane</location>
    </subcellularLocation>
    <text evidence="4">Accumulates in a sterol-enriched, polar membrane domain during root hair initiation.</text>
</comment>
<comment type="disruption phenotype">
    <text evidence="4">Basal shift of ARAC3/ROP6 and ARAC4/ROP2 positioning and broad lateral localization of D6PK in root hair-forming cells leading to basal shift of root hair positions.</text>
</comment>
<protein>
    <recommendedName>
        <fullName evidence="5">Phosphatidylinositol 4-phosphate 5-kinase 3</fullName>
        <shortName evidence="5">AtPIP5K3</shortName>
        <ecNumber evidence="1">2.7.1.68</ecNumber>
    </recommendedName>
    <alternativeName>
        <fullName evidence="5">1-phosphatidylinositol 4-phosphate kinase 3</fullName>
    </alternativeName>
    <alternativeName>
        <fullName evidence="5">Diphosphoinositide kinase 3</fullName>
    </alternativeName>
    <alternativeName>
        <fullName evidence="5">PtdIns(4)P-5-kinase 3</fullName>
    </alternativeName>
</protein>
<reference key="1">
    <citation type="journal article" date="1999" name="Nature">
        <title>Sequence and analysis of chromosome 2 of the plant Arabidopsis thaliana.</title>
        <authorList>
            <person name="Lin X."/>
            <person name="Kaul S."/>
            <person name="Rounsley S.D."/>
            <person name="Shea T.P."/>
            <person name="Benito M.-I."/>
            <person name="Town C.D."/>
            <person name="Fujii C.Y."/>
            <person name="Mason T.M."/>
            <person name="Bowman C.L."/>
            <person name="Barnstead M.E."/>
            <person name="Feldblyum T.V."/>
            <person name="Buell C.R."/>
            <person name="Ketchum K.A."/>
            <person name="Lee J.J."/>
            <person name="Ronning C.M."/>
            <person name="Koo H.L."/>
            <person name="Moffat K.S."/>
            <person name="Cronin L.A."/>
            <person name="Shen M."/>
            <person name="Pai G."/>
            <person name="Van Aken S."/>
            <person name="Umayam L."/>
            <person name="Tallon L.J."/>
            <person name="Gill J.E."/>
            <person name="Adams M.D."/>
            <person name="Carrera A.J."/>
            <person name="Creasy T.H."/>
            <person name="Goodman H.M."/>
            <person name="Somerville C.R."/>
            <person name="Copenhaver G.P."/>
            <person name="Preuss D."/>
            <person name="Nierman W.C."/>
            <person name="White O."/>
            <person name="Eisen J.A."/>
            <person name="Salzberg S.L."/>
            <person name="Fraser C.M."/>
            <person name="Venter J.C."/>
        </authorList>
    </citation>
    <scope>NUCLEOTIDE SEQUENCE [LARGE SCALE GENOMIC DNA]</scope>
    <source>
        <strain>cv. Columbia</strain>
    </source>
</reference>
<reference key="2">
    <citation type="journal article" date="2017" name="Plant J.">
        <title>Araport11: a complete reannotation of the Arabidopsis thaliana reference genome.</title>
        <authorList>
            <person name="Cheng C.Y."/>
            <person name="Krishnakumar V."/>
            <person name="Chan A.P."/>
            <person name="Thibaud-Nissen F."/>
            <person name="Schobel S."/>
            <person name="Town C.D."/>
        </authorList>
    </citation>
    <scope>GENOME REANNOTATION</scope>
    <source>
        <strain>cv. Columbia</strain>
    </source>
</reference>
<reference key="3">
    <citation type="journal article" date="2002" name="Plant Physiol.">
        <title>Inositol phospholipid metabolism in Arabidopsis. Characterized and putative isoforms of inositol phospholipid kinase and phosphoinositide-specific phospholipase C.</title>
        <authorList>
            <person name="Mueller-Roeber B."/>
            <person name="Pical C."/>
        </authorList>
    </citation>
    <scope>GENE FAMILY</scope>
    <scope>NOMENCLATURE</scope>
</reference>
<reference key="4">
    <citation type="journal article" date="2015" name="Nat. Plants">
        <title>Arabidopsis D6PK is a lipid domain-dependent mediator of root epidermal planar polarity.</title>
        <authorList>
            <person name="Stanislas T."/>
            <person name="Hueser A."/>
            <person name="Barbosa I.C.R."/>
            <person name="Kiefer C.S."/>
            <person name="Brackmann K."/>
            <person name="Pietra S."/>
            <person name="Gustavsson A."/>
            <person name="Zourelidou M."/>
            <person name="Schwechheimer C."/>
            <person name="Grebe M."/>
        </authorList>
    </citation>
    <scope>FUNCTION</scope>
    <scope>DISRUPTION PHENOTYPE</scope>
    <scope>SUBCELLULAR LOCATION</scope>
    <source>
        <strain>cv. Columbia</strain>
    </source>
</reference>
<gene>
    <name evidence="5" type="primary">PIP5K3</name>
    <name evidence="7" type="ordered locus">At2g26420</name>
    <name evidence="8" type="ORF">T9J22.9</name>
</gene>
<organism>
    <name type="scientific">Arabidopsis thaliana</name>
    <name type="common">Mouse-ear cress</name>
    <dbReference type="NCBI Taxonomy" id="3702"/>
    <lineage>
        <taxon>Eukaryota</taxon>
        <taxon>Viridiplantae</taxon>
        <taxon>Streptophyta</taxon>
        <taxon>Embryophyta</taxon>
        <taxon>Tracheophyta</taxon>
        <taxon>Spermatophyta</taxon>
        <taxon>Magnoliopsida</taxon>
        <taxon>eudicotyledons</taxon>
        <taxon>Gunneridae</taxon>
        <taxon>Pentapetalae</taxon>
        <taxon>rosids</taxon>
        <taxon>malvids</taxon>
        <taxon>Brassicales</taxon>
        <taxon>Brassicaceae</taxon>
        <taxon>Camelineae</taxon>
        <taxon>Arabidopsis</taxon>
    </lineage>
</organism>
<accession>O48709</accession>
<name>PI5K3_ARATH</name>
<feature type="chain" id="PRO_0000185475" description="Phosphatidylinositol 4-phosphate 5-kinase 3">
    <location>
        <begin position="1"/>
        <end position="705"/>
    </location>
</feature>
<feature type="repeat" description="MORN 1" evidence="2">
    <location>
        <begin position="58"/>
        <end position="80"/>
    </location>
</feature>
<feature type="repeat" description="MORN 2" evidence="2">
    <location>
        <begin position="81"/>
        <end position="103"/>
    </location>
</feature>
<feature type="repeat" description="MORN 3" evidence="2">
    <location>
        <begin position="104"/>
        <end position="126"/>
    </location>
</feature>
<feature type="repeat" description="MORN 4" evidence="2">
    <location>
        <begin position="127"/>
        <end position="149"/>
    </location>
</feature>
<feature type="repeat" description="MORN 5" evidence="2">
    <location>
        <begin position="150"/>
        <end position="172"/>
    </location>
</feature>
<feature type="repeat" description="MORN 6" evidence="2">
    <location>
        <begin position="173"/>
        <end position="195"/>
    </location>
</feature>
<feature type="repeat" description="MORN 7" evidence="2">
    <location>
        <begin position="196"/>
        <end position="218"/>
    </location>
</feature>
<feature type="domain" description="PIPK" evidence="3">
    <location>
        <begin position="321"/>
        <end position="701"/>
    </location>
</feature>
<feature type="region of interest" description="Activation loop" evidence="6">
    <location>
        <begin position="661"/>
        <end position="682"/>
    </location>
</feature>
<sequence>MQETVFLFTEENLNKEQSLGVKYKQSSRRVVPMTSCEVSDTAAEIRIVEKVLKNGDLYNGGLSAGVPHGTGKYLWSDGCMYEGEWTRGKASGKGRFSWPSGATYEGQFKDGRMDGEGTFIGIDGDTYRGHWLWGRKHGYGEKRYANGDGYQGNWKANLQDGNGRYVWSDGNEYVGEWKNGVISGKGKMTWANGNRYDGLWENGAPVGKGVLSWGEEKTSYNGWGRKSKKKDEEIVQNHKLSSVETLSANTNFPRICISELEDTGVCDHVEASPYTSESDTSGCGEQEWARSPLLLESGGAMSVQQSPRWLDEGDVKKPGHTVTAGHKNYDLMLNLQLGIRYSVGKHASLLRELRHSDFDPKDKQWTRFPPEGSKSTPPHLSAEFKWKDYCPIVFRHLRDLFAIDQADYMLAICGNESLREFASPGKSGSAFYLTQDERYMIKTMKKSEIKVLLKMLPNYYEHVSKYKNSLVTKFFGVHCVKPVGGQKTRFIVMGNLFCSEYRIHKRFDLKGSSHGRTIDKDEGEIDETTTLKDLDLKYVFRLETSWFQAFINQIDLDCEFLEAERIMDYSLLIGLHFRESGMRDDISLGIGRRDQEDKLMRGNGPLMRLGESTPAKAEQVSRFEEETWEEDAIDNSNPKGTRKEAVEVILYFGVIDILQDYDITKKLEHAYKSLHADPASISAVDPKLYSRRFRDFINKIFIEDK</sequence>
<keyword id="KW-0067">ATP-binding</keyword>
<keyword id="KW-1003">Cell membrane</keyword>
<keyword id="KW-0418">Kinase</keyword>
<keyword id="KW-0472">Membrane</keyword>
<keyword id="KW-0547">Nucleotide-binding</keyword>
<keyword id="KW-1185">Reference proteome</keyword>
<keyword id="KW-0677">Repeat</keyword>
<keyword id="KW-0808">Transferase</keyword>
<proteinExistence type="predicted"/>